<dbReference type="EC" id="1.8.1.2" evidence="1"/>
<dbReference type="EMBL" id="BX950851">
    <property type="protein sequence ID" value="CAG76445.1"/>
    <property type="molecule type" value="Genomic_DNA"/>
</dbReference>
<dbReference type="RefSeq" id="WP_011095050.1">
    <property type="nucleotide sequence ID" value="NC_004547.2"/>
</dbReference>
<dbReference type="SMR" id="Q6D1A1"/>
<dbReference type="STRING" id="218491.ECA3547"/>
<dbReference type="KEGG" id="eca:ECA3547"/>
<dbReference type="PATRIC" id="fig|218491.5.peg.3594"/>
<dbReference type="eggNOG" id="COG0369">
    <property type="taxonomic scope" value="Bacteria"/>
</dbReference>
<dbReference type="HOGENOM" id="CLU_001570_17_7_6"/>
<dbReference type="OrthoDB" id="9816402at2"/>
<dbReference type="UniPathway" id="UPA00140">
    <property type="reaction ID" value="UER00207"/>
</dbReference>
<dbReference type="Proteomes" id="UP000007966">
    <property type="component" value="Chromosome"/>
</dbReference>
<dbReference type="GO" id="GO:0005829">
    <property type="term" value="C:cytosol"/>
    <property type="evidence" value="ECO:0007669"/>
    <property type="project" value="TreeGrafter"/>
</dbReference>
<dbReference type="GO" id="GO:0050660">
    <property type="term" value="F:flavin adenine dinucleotide binding"/>
    <property type="evidence" value="ECO:0007669"/>
    <property type="project" value="InterPro"/>
</dbReference>
<dbReference type="GO" id="GO:0010181">
    <property type="term" value="F:FMN binding"/>
    <property type="evidence" value="ECO:0007669"/>
    <property type="project" value="InterPro"/>
</dbReference>
<dbReference type="GO" id="GO:0004783">
    <property type="term" value="F:sulfite reductase (NADPH) activity"/>
    <property type="evidence" value="ECO:0007669"/>
    <property type="project" value="UniProtKB-UniRule"/>
</dbReference>
<dbReference type="GO" id="GO:0019344">
    <property type="term" value="P:cysteine biosynthetic process"/>
    <property type="evidence" value="ECO:0007669"/>
    <property type="project" value="UniProtKB-KW"/>
</dbReference>
<dbReference type="GO" id="GO:0070814">
    <property type="term" value="P:hydrogen sulfide biosynthetic process"/>
    <property type="evidence" value="ECO:0007669"/>
    <property type="project" value="UniProtKB-UniRule"/>
</dbReference>
<dbReference type="GO" id="GO:0000103">
    <property type="term" value="P:sulfate assimilation"/>
    <property type="evidence" value="ECO:0007669"/>
    <property type="project" value="UniProtKB-UniRule"/>
</dbReference>
<dbReference type="CDD" id="cd06199">
    <property type="entry name" value="SiR"/>
    <property type="match status" value="1"/>
</dbReference>
<dbReference type="FunFam" id="3.40.50.80:FF:000001">
    <property type="entry name" value="NADPH--cytochrome P450 reductase 1"/>
    <property type="match status" value="1"/>
</dbReference>
<dbReference type="FunFam" id="1.20.990.10:FF:000004">
    <property type="entry name" value="Sulfite reductase [NADPH] flavoprotein alpha-component"/>
    <property type="match status" value="1"/>
</dbReference>
<dbReference type="FunFam" id="3.40.50.360:FF:000018">
    <property type="entry name" value="Sulfite reductase [NADPH] flavoprotein alpha-component"/>
    <property type="match status" value="1"/>
</dbReference>
<dbReference type="Gene3D" id="3.40.50.360">
    <property type="match status" value="1"/>
</dbReference>
<dbReference type="Gene3D" id="1.20.990.10">
    <property type="entry name" value="NADPH-cytochrome p450 Reductase, Chain A, domain 3"/>
    <property type="match status" value="1"/>
</dbReference>
<dbReference type="Gene3D" id="3.40.50.80">
    <property type="entry name" value="Nucleotide-binding domain of ferredoxin-NADP reductase (FNR) module"/>
    <property type="match status" value="1"/>
</dbReference>
<dbReference type="Gene3D" id="2.40.30.10">
    <property type="entry name" value="Translation factors"/>
    <property type="match status" value="1"/>
</dbReference>
<dbReference type="HAMAP" id="MF_01541">
    <property type="entry name" value="CysJ"/>
    <property type="match status" value="1"/>
</dbReference>
<dbReference type="InterPro" id="IPR010199">
    <property type="entry name" value="CysJ"/>
</dbReference>
<dbReference type="InterPro" id="IPR003097">
    <property type="entry name" value="CysJ-like_FAD-binding"/>
</dbReference>
<dbReference type="InterPro" id="IPR029758">
    <property type="entry name" value="CysJ_Proteobact"/>
</dbReference>
<dbReference type="InterPro" id="IPR017927">
    <property type="entry name" value="FAD-bd_FR_type"/>
</dbReference>
<dbReference type="InterPro" id="IPR001094">
    <property type="entry name" value="Flavdoxin-like"/>
</dbReference>
<dbReference type="InterPro" id="IPR008254">
    <property type="entry name" value="Flavodoxin/NO_synth"/>
</dbReference>
<dbReference type="InterPro" id="IPR001709">
    <property type="entry name" value="Flavoprot_Pyr_Nucl_cyt_Rdtase"/>
</dbReference>
<dbReference type="InterPro" id="IPR029039">
    <property type="entry name" value="Flavoprotein-like_sf"/>
</dbReference>
<dbReference type="InterPro" id="IPR039261">
    <property type="entry name" value="FNR_nucleotide-bd"/>
</dbReference>
<dbReference type="InterPro" id="IPR023173">
    <property type="entry name" value="NADPH_Cyt_P450_Rdtase_alpha"/>
</dbReference>
<dbReference type="InterPro" id="IPR001433">
    <property type="entry name" value="OxRdtase_FAD/NAD-bd"/>
</dbReference>
<dbReference type="InterPro" id="IPR017938">
    <property type="entry name" value="Riboflavin_synthase-like_b-brl"/>
</dbReference>
<dbReference type="NCBIfam" id="TIGR01931">
    <property type="entry name" value="cysJ"/>
    <property type="match status" value="1"/>
</dbReference>
<dbReference type="NCBIfam" id="NF008197">
    <property type="entry name" value="PRK10953.1"/>
    <property type="match status" value="1"/>
</dbReference>
<dbReference type="PANTHER" id="PTHR19384:SF128">
    <property type="entry name" value="NADPH OXIDOREDUCTASE A"/>
    <property type="match status" value="1"/>
</dbReference>
<dbReference type="PANTHER" id="PTHR19384">
    <property type="entry name" value="NITRIC OXIDE SYNTHASE-RELATED"/>
    <property type="match status" value="1"/>
</dbReference>
<dbReference type="Pfam" id="PF00667">
    <property type="entry name" value="FAD_binding_1"/>
    <property type="match status" value="1"/>
</dbReference>
<dbReference type="Pfam" id="PF00258">
    <property type="entry name" value="Flavodoxin_1"/>
    <property type="match status" value="1"/>
</dbReference>
<dbReference type="Pfam" id="PF00175">
    <property type="entry name" value="NAD_binding_1"/>
    <property type="match status" value="1"/>
</dbReference>
<dbReference type="PIRSF" id="PIRSF000207">
    <property type="entry name" value="SiR-FP_CysJ"/>
    <property type="match status" value="1"/>
</dbReference>
<dbReference type="PRINTS" id="PR00369">
    <property type="entry name" value="FLAVODOXIN"/>
</dbReference>
<dbReference type="PRINTS" id="PR00371">
    <property type="entry name" value="FPNCR"/>
</dbReference>
<dbReference type="SUPFAM" id="SSF52343">
    <property type="entry name" value="Ferredoxin reductase-like, C-terminal NADP-linked domain"/>
    <property type="match status" value="1"/>
</dbReference>
<dbReference type="SUPFAM" id="SSF52218">
    <property type="entry name" value="Flavoproteins"/>
    <property type="match status" value="1"/>
</dbReference>
<dbReference type="SUPFAM" id="SSF63380">
    <property type="entry name" value="Riboflavin synthase domain-like"/>
    <property type="match status" value="1"/>
</dbReference>
<dbReference type="PROSITE" id="PS51384">
    <property type="entry name" value="FAD_FR"/>
    <property type="match status" value="1"/>
</dbReference>
<dbReference type="PROSITE" id="PS50902">
    <property type="entry name" value="FLAVODOXIN_LIKE"/>
    <property type="match status" value="1"/>
</dbReference>
<gene>
    <name evidence="1" type="primary">cysJ</name>
    <name type="ordered locus">ECA3547</name>
</gene>
<comment type="function">
    <text evidence="1">Component of the sulfite reductase complex that catalyzes the 6-electron reduction of sulfite to sulfide. This is one of several activities required for the biosynthesis of L-cysteine from sulfate. The flavoprotein component catalyzes the electron flow from NADPH -&gt; FAD -&gt; FMN to the hemoprotein component.</text>
</comment>
<comment type="catalytic activity">
    <reaction evidence="1">
        <text>hydrogen sulfide + 3 NADP(+) + 3 H2O = sulfite + 3 NADPH + 4 H(+)</text>
        <dbReference type="Rhea" id="RHEA:13801"/>
        <dbReference type="ChEBI" id="CHEBI:15377"/>
        <dbReference type="ChEBI" id="CHEBI:15378"/>
        <dbReference type="ChEBI" id="CHEBI:17359"/>
        <dbReference type="ChEBI" id="CHEBI:29919"/>
        <dbReference type="ChEBI" id="CHEBI:57783"/>
        <dbReference type="ChEBI" id="CHEBI:58349"/>
        <dbReference type="EC" id="1.8.1.2"/>
    </reaction>
</comment>
<comment type="cofactor">
    <cofactor evidence="1">
        <name>FAD</name>
        <dbReference type="ChEBI" id="CHEBI:57692"/>
    </cofactor>
    <text evidence="1">Binds 1 FAD per subunit.</text>
</comment>
<comment type="cofactor">
    <cofactor evidence="1">
        <name>FMN</name>
        <dbReference type="ChEBI" id="CHEBI:58210"/>
    </cofactor>
    <text evidence="1">Binds 1 FMN per subunit.</text>
</comment>
<comment type="pathway">
    <text evidence="1">Sulfur metabolism; hydrogen sulfide biosynthesis; hydrogen sulfide from sulfite (NADPH route): step 1/1.</text>
</comment>
<comment type="subunit">
    <text evidence="1">Alpha(8)-beta(8). The alpha component is a flavoprotein, the beta component is a hemoprotein.</text>
</comment>
<comment type="similarity">
    <text evidence="1">Belongs to the NADPH-dependent sulphite reductase flavoprotein subunit CysJ family.</text>
</comment>
<comment type="similarity">
    <text evidence="1">In the N-terminal section; belongs to the flavodoxin family.</text>
</comment>
<comment type="similarity">
    <text evidence="1">In the C-terminal section; belongs to the flavoprotein pyridine nucleotide cytochrome reductase family.</text>
</comment>
<organism>
    <name type="scientific">Pectobacterium atrosepticum (strain SCRI 1043 / ATCC BAA-672)</name>
    <name type="common">Erwinia carotovora subsp. atroseptica</name>
    <dbReference type="NCBI Taxonomy" id="218491"/>
    <lineage>
        <taxon>Bacteria</taxon>
        <taxon>Pseudomonadati</taxon>
        <taxon>Pseudomonadota</taxon>
        <taxon>Gammaproteobacteria</taxon>
        <taxon>Enterobacterales</taxon>
        <taxon>Pectobacteriaceae</taxon>
        <taxon>Pectobacterium</taxon>
    </lineage>
</organism>
<keyword id="KW-0028">Amino-acid biosynthesis</keyword>
<keyword id="KW-0198">Cysteine biosynthesis</keyword>
<keyword id="KW-0249">Electron transport</keyword>
<keyword id="KW-0274">FAD</keyword>
<keyword id="KW-0285">Flavoprotein</keyword>
<keyword id="KW-0288">FMN</keyword>
<keyword id="KW-0521">NADP</keyword>
<keyword id="KW-0560">Oxidoreductase</keyword>
<keyword id="KW-1185">Reference proteome</keyword>
<keyword id="KW-0813">Transport</keyword>
<reference key="1">
    <citation type="journal article" date="2004" name="Proc. Natl. Acad. Sci. U.S.A.">
        <title>Genome sequence of the enterobacterial phytopathogen Erwinia carotovora subsp. atroseptica and characterization of virulence factors.</title>
        <authorList>
            <person name="Bell K.S."/>
            <person name="Sebaihia M."/>
            <person name="Pritchard L."/>
            <person name="Holden M.T.G."/>
            <person name="Hyman L.J."/>
            <person name="Holeva M.C."/>
            <person name="Thomson N.R."/>
            <person name="Bentley S.D."/>
            <person name="Churcher L.J.C."/>
            <person name="Mungall K."/>
            <person name="Atkin R."/>
            <person name="Bason N."/>
            <person name="Brooks K."/>
            <person name="Chillingworth T."/>
            <person name="Clark K."/>
            <person name="Doggett J."/>
            <person name="Fraser A."/>
            <person name="Hance Z."/>
            <person name="Hauser H."/>
            <person name="Jagels K."/>
            <person name="Moule S."/>
            <person name="Norbertczak H."/>
            <person name="Ormond D."/>
            <person name="Price C."/>
            <person name="Quail M.A."/>
            <person name="Sanders M."/>
            <person name="Walker D."/>
            <person name="Whitehead S."/>
            <person name="Salmond G.P.C."/>
            <person name="Birch P.R.J."/>
            <person name="Parkhill J."/>
            <person name="Toth I.K."/>
        </authorList>
    </citation>
    <scope>NUCLEOTIDE SEQUENCE [LARGE SCALE GENOMIC DNA]</scope>
    <source>
        <strain>SCRI 1043 / ATCC BAA-672</strain>
    </source>
</reference>
<evidence type="ECO:0000255" key="1">
    <source>
        <dbReference type="HAMAP-Rule" id="MF_01541"/>
    </source>
</evidence>
<feature type="chain" id="PRO_0000199926" description="Sulfite reductase [NADPH] flavoprotein alpha-component">
    <location>
        <begin position="1"/>
        <end position="609"/>
    </location>
</feature>
<feature type="domain" description="Flavodoxin-like" evidence="1">
    <location>
        <begin position="72"/>
        <end position="210"/>
    </location>
</feature>
<feature type="domain" description="FAD-binding FR-type" evidence="1">
    <location>
        <begin position="244"/>
        <end position="458"/>
    </location>
</feature>
<feature type="binding site" evidence="1">
    <location>
        <begin position="78"/>
        <end position="83"/>
    </location>
    <ligand>
        <name>FMN</name>
        <dbReference type="ChEBI" id="CHEBI:58210"/>
    </ligand>
</feature>
<feature type="binding site" evidence="1">
    <location>
        <begin position="125"/>
        <end position="128"/>
    </location>
    <ligand>
        <name>FMN</name>
        <dbReference type="ChEBI" id="CHEBI:58210"/>
    </ligand>
</feature>
<feature type="binding site" evidence="1">
    <location>
        <position position="332"/>
    </location>
    <ligand>
        <name>FAD</name>
        <dbReference type="ChEBI" id="CHEBI:57692"/>
    </ligand>
</feature>
<feature type="binding site" evidence="1">
    <location>
        <position position="366"/>
    </location>
    <ligand>
        <name>FAD</name>
        <dbReference type="ChEBI" id="CHEBI:57692"/>
    </ligand>
</feature>
<feature type="binding site" evidence="1">
    <location>
        <begin position="396"/>
        <end position="399"/>
    </location>
    <ligand>
        <name>FAD</name>
        <dbReference type="ChEBI" id="CHEBI:57692"/>
    </ligand>
</feature>
<feature type="binding site" evidence="1">
    <location>
        <begin position="414"/>
        <end position="416"/>
    </location>
    <ligand>
        <name>FAD</name>
        <dbReference type="ChEBI" id="CHEBI:57692"/>
    </ligand>
</feature>
<feature type="binding site" evidence="1">
    <location>
        <position position="420"/>
    </location>
    <ligand>
        <name>FAD</name>
        <dbReference type="ChEBI" id="CHEBI:57692"/>
    </ligand>
</feature>
<feature type="binding site" evidence="1">
    <location>
        <begin position="429"/>
        <end position="432"/>
    </location>
    <ligand>
        <name>FAD</name>
        <dbReference type="ChEBI" id="CHEBI:57692"/>
    </ligand>
</feature>
<feature type="binding site" evidence="1">
    <location>
        <begin position="529"/>
        <end position="530"/>
    </location>
    <ligand>
        <name>NADP(+)</name>
        <dbReference type="ChEBI" id="CHEBI:58349"/>
    </ligand>
</feature>
<feature type="binding site" evidence="1">
    <location>
        <begin position="535"/>
        <end position="539"/>
    </location>
    <ligand>
        <name>NADP(+)</name>
        <dbReference type="ChEBI" id="CHEBI:58349"/>
    </ligand>
</feature>
<feature type="binding site" evidence="1">
    <location>
        <position position="571"/>
    </location>
    <ligand>
        <name>NADP(+)</name>
        <dbReference type="ChEBI" id="CHEBI:58349"/>
    </ligand>
</feature>
<feature type="binding site" evidence="1">
    <location>
        <position position="609"/>
    </location>
    <ligand>
        <name>FAD</name>
        <dbReference type="ChEBI" id="CHEBI:57692"/>
    </ligand>
</feature>
<protein>
    <recommendedName>
        <fullName evidence="1">Sulfite reductase [NADPH] flavoprotein alpha-component</fullName>
        <shortName evidence="1">SiR-FP</shortName>
        <ecNumber evidence="1">1.8.1.2</ecNumber>
    </recommendedName>
</protein>
<proteinExistence type="inferred from homology"/>
<sequence>MTTPVSPTSLLPLSAEQLTRLQAATGDFSSTQLAWLSGYFWGLIQQPGNVQPGATIDAATTASAVTVPVQTITLISASQTGNARRVAEQLRDDLLAAKLPVNLVNAGDYKFKQIGQEKLLLIVASTQGEGEPAEEAVALHKFLLSKKAPELKDTAFAVFGLGDTSYEFFSKAGKDFDGRLAELGAERLLDRVDADVDYQALAAQWRRQLVDILQARVPVQGNAVAQLAAQGALDEITSSPYSKSSPLQATFAVNQKVTGRGSEKDVRHIEIDLGDSGLRYQPGDALGVWFDNDPALVQELLELLWLKGDESVSVDGKALPLSQALKSHFELTQNTAPIVEKYAALSRNETLLSLLADKPALQQFAQRTPLVDMVRQAPVELTAEQLLGLLRPLTPRLYSIASSQAEAESEVHITVGVVRYEYEGRARAGGASSYLADRLSEDDEIRVFIEHNDNFRLPANSETPVIMIGPGTGIAPFRAFMQQRDADGAEGKNWLFFGNPHFTEDFLYQVEWQRYVKEGLLTHIDLAWSRDQAHKIYVQDKLREKGAEVWRWIQDGAHLYVCGDANRMAKDVERALLDVIVEHGGMDSEQADEFLSDLRLERRYQRDVY</sequence>
<accession>Q6D1A1</accession>
<name>CYSJ_PECAS</name>